<gene>
    <name evidence="3" type="primary">dmaW</name>
    <name type="ORF">MCYG_06055</name>
</gene>
<reference key="1">
    <citation type="journal article" date="2012" name="MBio">
        <title>Comparative genome analysis of Trichophyton rubrum and related dermatophytes reveals candidate genes involved in infection.</title>
        <authorList>
            <person name="Martinez D.A."/>
            <person name="Oliver B.G."/>
            <person name="Graeser Y."/>
            <person name="Goldberg J.M."/>
            <person name="Li W."/>
            <person name="Martinez-Rossi N.M."/>
            <person name="Monod M."/>
            <person name="Shelest E."/>
            <person name="Barton R.C."/>
            <person name="Birch E."/>
            <person name="Brakhage A.A."/>
            <person name="Chen Z."/>
            <person name="Gurr S.J."/>
            <person name="Heiman D."/>
            <person name="Heitman J."/>
            <person name="Kosti I."/>
            <person name="Rossi A."/>
            <person name="Saif S."/>
            <person name="Samalova M."/>
            <person name="Saunders C.W."/>
            <person name="Shea T."/>
            <person name="Summerbell R.C."/>
            <person name="Xu J."/>
            <person name="Young S."/>
            <person name="Zeng Q."/>
            <person name="Birren B.W."/>
            <person name="Cuomo C.A."/>
            <person name="White T.C."/>
        </authorList>
    </citation>
    <scope>NUCLEOTIDE SEQUENCE [LARGE SCALE GENOMIC DNA]</scope>
    <source>
        <strain>ATCC MYA-4605 / CBS 113480</strain>
    </source>
</reference>
<reference key="2">
    <citation type="journal article" date="2012" name="Microbiology">
        <title>Genome mining reveals the presence of a conserved gene cluster for the biosynthesis of ergot alkaloid precursors in the fungal family Arthrodermataceae.</title>
        <authorList>
            <person name="Wallwey C."/>
            <person name="Heddergott C."/>
            <person name="Xie X."/>
            <person name="Brakhage A.A."/>
            <person name="Li S.M."/>
        </authorList>
    </citation>
    <scope>FUNCTION</scope>
</reference>
<proteinExistence type="inferred from homology"/>
<name>DMAW_ARTOC</name>
<sequence length="446" mass="50836">MGSIEIPNCSGSLVYKTISDFIEFPNHEQKLWWHSTAPMFAEMLRVAGYDLHSQYKILGIFLNHVIPFLGVYPTRINNRWLSILTRYGTPFELSLNCSQSLVRYTYEPINSATGTPKDPFNTHSIWDALDRLMPLQKGIDLEFFKHLKQDLTVDDQDSAYLLENNLVGGQIRTQNKLALDLKGGNFVLKTYIYPALKSLATGKSIKTLVFDSVYRLCRQNPSLEAPLRALEEYVDSKGPNSTASPRLLSCDLIDPSKSRVKIYILELNVTLEAMEDLWTMGGRLNDASTLAGLEMLRELWGLIKLPSGMRDYPEPFLQLGTIPDEQLPLMANYTLHHNQAMPEPQVYFTTFGLNDGRVADGLVTFFERRGWSHMAQTYKDSLRAYYPHADQETLNYLHAYISFSYRKGTPYLSVYLQSFETGDWPISNFGIPVAKPLRSNISDPDR</sequence>
<keyword id="KW-0017">Alkaloid metabolism</keyword>
<keyword id="KW-1185">Reference proteome</keyword>
<keyword id="KW-0808">Transferase</keyword>
<evidence type="ECO:0000250" key="1">
    <source>
        <dbReference type="UniProtKB" id="Q50EL0"/>
    </source>
</evidence>
<evidence type="ECO:0000269" key="2">
    <source>
    </source>
</evidence>
<evidence type="ECO:0000303" key="3">
    <source>
    </source>
</evidence>
<evidence type="ECO:0000305" key="4"/>
<evidence type="ECO:0000305" key="5">
    <source>
    </source>
</evidence>
<accession>C5FTN3</accession>
<organism>
    <name type="scientific">Arthroderma otae (strain ATCC MYA-4605 / CBS 113480)</name>
    <name type="common">Microsporum canis</name>
    <dbReference type="NCBI Taxonomy" id="554155"/>
    <lineage>
        <taxon>Eukaryota</taxon>
        <taxon>Fungi</taxon>
        <taxon>Dikarya</taxon>
        <taxon>Ascomycota</taxon>
        <taxon>Pezizomycotina</taxon>
        <taxon>Eurotiomycetes</taxon>
        <taxon>Eurotiomycetidae</taxon>
        <taxon>Onygenales</taxon>
        <taxon>Arthrodermataceae</taxon>
        <taxon>Microsporum</taxon>
    </lineage>
</organism>
<feature type="chain" id="PRO_0000439102" description="Tryptophan dimethylallyltransferase">
    <location>
        <begin position="1"/>
        <end position="446"/>
    </location>
</feature>
<feature type="binding site" evidence="1">
    <location>
        <begin position="83"/>
        <end position="84"/>
    </location>
    <ligand>
        <name>L-tryptophan</name>
        <dbReference type="ChEBI" id="CHEBI:57912"/>
    </ligand>
</feature>
<feature type="binding site" evidence="1">
    <location>
        <position position="92"/>
    </location>
    <ligand>
        <name>L-tryptophan</name>
        <dbReference type="ChEBI" id="CHEBI:57912"/>
    </ligand>
</feature>
<feature type="binding site" evidence="1">
    <location>
        <position position="103"/>
    </location>
    <ligand>
        <name>substrate</name>
    </ligand>
</feature>
<feature type="binding site" evidence="1">
    <location>
        <position position="189"/>
    </location>
    <ligand>
        <name>substrate</name>
    </ligand>
</feature>
<feature type="binding site" evidence="1">
    <location>
        <position position="191"/>
    </location>
    <ligand>
        <name>substrate</name>
    </ligand>
</feature>
<feature type="binding site" evidence="1">
    <location>
        <position position="193"/>
    </location>
    <ligand>
        <name>L-tryptophan</name>
        <dbReference type="ChEBI" id="CHEBI:57912"/>
    </ligand>
</feature>
<feature type="binding site" evidence="1">
    <location>
        <position position="246"/>
    </location>
    <ligand>
        <name>L-tryptophan</name>
        <dbReference type="ChEBI" id="CHEBI:57912"/>
    </ligand>
</feature>
<feature type="binding site" evidence="1">
    <location>
        <position position="259"/>
    </location>
    <ligand>
        <name>substrate</name>
    </ligand>
</feature>
<feature type="binding site" evidence="1">
    <location>
        <position position="261"/>
    </location>
    <ligand>
        <name>substrate</name>
    </ligand>
</feature>
<feature type="binding site" evidence="1">
    <location>
        <position position="263"/>
    </location>
    <ligand>
        <name>substrate</name>
    </ligand>
</feature>
<feature type="binding site" evidence="1">
    <location>
        <position position="345"/>
    </location>
    <ligand>
        <name>substrate</name>
    </ligand>
</feature>
<feature type="binding site" evidence="1">
    <location>
        <position position="347"/>
    </location>
    <ligand>
        <name>substrate</name>
    </ligand>
</feature>
<protein>
    <recommendedName>
        <fullName evidence="4">Tryptophan dimethylallyltransferase</fullName>
        <ecNumber evidence="1">2.5.1.34</ecNumber>
    </recommendedName>
    <alternativeName>
        <fullName evidence="3">4-dimethylallyltryptophan synthase</fullName>
        <shortName evidence="3">DMATS</shortName>
    </alternativeName>
    <alternativeName>
        <fullName evidence="4">All-trans-hexaprenyl-diphosphate synthase</fullName>
    </alternativeName>
    <alternativeName>
        <fullName evidence="4">L-tryptophan dimethylallyl transferase</fullName>
    </alternativeName>
</protein>
<dbReference type="EC" id="2.5.1.34" evidence="1"/>
<dbReference type="EMBL" id="DS995705">
    <property type="protein sequence ID" value="EEQ33236.1"/>
    <property type="molecule type" value="Genomic_DNA"/>
</dbReference>
<dbReference type="RefSeq" id="XP_002846186.1">
    <property type="nucleotide sequence ID" value="XM_002846140.1"/>
</dbReference>
<dbReference type="SMR" id="C5FTN3"/>
<dbReference type="STRING" id="554155.C5FTN3"/>
<dbReference type="GeneID" id="9227068"/>
<dbReference type="VEuPathDB" id="FungiDB:MCYG_06055"/>
<dbReference type="eggNOG" id="ENOG502S2XP">
    <property type="taxonomic scope" value="Eukaryota"/>
</dbReference>
<dbReference type="HOGENOM" id="CLU_037431_0_0_1"/>
<dbReference type="OMA" id="EPQVYFT"/>
<dbReference type="OrthoDB" id="5392033at2759"/>
<dbReference type="UniPathway" id="UPA00327"/>
<dbReference type="Proteomes" id="UP000002035">
    <property type="component" value="Unassembled WGS sequence"/>
</dbReference>
<dbReference type="GO" id="GO:0050364">
    <property type="term" value="F:tryptophan dimethylallyltransferase activity"/>
    <property type="evidence" value="ECO:0007669"/>
    <property type="project" value="UniProtKB-EC"/>
</dbReference>
<dbReference type="GO" id="GO:0035835">
    <property type="term" value="P:indole alkaloid biosynthetic process"/>
    <property type="evidence" value="ECO:0007669"/>
    <property type="project" value="UniProtKB-UniPathway"/>
</dbReference>
<dbReference type="CDD" id="cd13929">
    <property type="entry name" value="PT-DMATS_CymD"/>
    <property type="match status" value="1"/>
</dbReference>
<dbReference type="InterPro" id="IPR033964">
    <property type="entry name" value="Aro_prenylTrfase"/>
</dbReference>
<dbReference type="InterPro" id="IPR017795">
    <property type="entry name" value="Aro_prenylTrfase_DMATS"/>
</dbReference>
<dbReference type="InterPro" id="IPR012148">
    <property type="entry name" value="DMATS-type_fun"/>
</dbReference>
<dbReference type="NCBIfam" id="TIGR03429">
    <property type="entry name" value="arom_pren_DMATS"/>
    <property type="match status" value="1"/>
</dbReference>
<dbReference type="PANTHER" id="PTHR40627">
    <property type="entry name" value="INDOLE PRENYLTRANSFERASE TDIB-RELATED"/>
    <property type="match status" value="1"/>
</dbReference>
<dbReference type="PANTHER" id="PTHR40627:SF3">
    <property type="entry name" value="PRENYLTRANSFERASE ASQH2-RELATED"/>
    <property type="match status" value="1"/>
</dbReference>
<dbReference type="Pfam" id="PF11991">
    <property type="entry name" value="Trp_DMAT"/>
    <property type="match status" value="1"/>
</dbReference>
<dbReference type="PIRSF" id="PIRSF000509">
    <property type="entry name" value="Trp_DMAT"/>
    <property type="match status" value="1"/>
</dbReference>
<dbReference type="SFLD" id="SFLDS00036">
    <property type="entry name" value="Aromatic_Prenyltransferase"/>
    <property type="match status" value="1"/>
</dbReference>
<dbReference type="SFLD" id="SFLDG01162">
    <property type="entry name" value="I"/>
    <property type="match status" value="1"/>
</dbReference>
<comment type="function">
    <text evidence="2">Tryptophan dimethylallyltransferase; part of the gene cluster that mediates the biosynthesis of fungal ergot alkaloid (PubMed:22403186). DmaW catalyzes the first step of ergot alkaloid biosynthesis by condensing dimethylallyl diphosphate (DMAP) and tryptophan to form 4-dimethylallyl-L-tryptophan (PubMed:22403186). The second step is catalyzed by the methyltransferase easF that methylates 4-dimethylallyl-L-tryptophan in the presence of S-adenosyl-L-methionine, resulting in the formation of 4-dimethylallyl-L-abrine (PubMed:22403186). The catalase easC and the FAD-dependent oxidoreductase easE then transform 4-dimethylallyl-L-abrine to chanoclavine-I which is further oxidized by easD in the presence of NAD(+), resulting in the formation of chanoclavine-I aldehyde (PubMed:22403186). Chanoclavine-I aldehyde is the precursor of ergoamides and ergopeptines in Clavicipitaceae, and clavine-type alcaloids such as fumiclavine in Trichocomaceae (PubMed:22403186). However, the metabolites downstream of chanoclavine-I aldehyde in Arthrodermataceae have not been identified yet (PubMed:22403186).</text>
</comment>
<comment type="catalytic activity">
    <reaction evidence="1">
        <text>L-tryptophan + dimethylallyl diphosphate = 4-(3-methylbut-2-enyl)-L-tryptophan + diphosphate</text>
        <dbReference type="Rhea" id="RHEA:14173"/>
        <dbReference type="ChEBI" id="CHEBI:33019"/>
        <dbReference type="ChEBI" id="CHEBI:57623"/>
        <dbReference type="ChEBI" id="CHEBI:57912"/>
        <dbReference type="ChEBI" id="CHEBI:58209"/>
        <dbReference type="EC" id="2.5.1.34"/>
    </reaction>
</comment>
<comment type="pathway">
    <text evidence="5">Alkaloid biosynthesis; ergot alkaloid biosynthesis.</text>
</comment>
<comment type="subunit">
    <text evidence="1">Homodimer.</text>
</comment>
<comment type="similarity">
    <text evidence="4">Belongs to the tryptophan dimethylallyltransferase family.</text>
</comment>